<proteinExistence type="inferred from homology"/>
<dbReference type="EC" id="5.4.99.27" evidence="1"/>
<dbReference type="EMBL" id="AE009950">
    <property type="protein sequence ID" value="AAL81679.1"/>
    <property type="molecule type" value="Genomic_DNA"/>
</dbReference>
<dbReference type="RefSeq" id="WP_011012702.1">
    <property type="nucleotide sequence ID" value="NZ_CP023154.1"/>
</dbReference>
<dbReference type="SMR" id="Q8U0N1"/>
<dbReference type="STRING" id="186497.PF1555"/>
<dbReference type="PaxDb" id="186497-PF1555"/>
<dbReference type="GeneID" id="41713376"/>
<dbReference type="KEGG" id="pfu:PF1555"/>
<dbReference type="PATRIC" id="fig|186497.12.peg.1621"/>
<dbReference type="eggNOG" id="arCOG04252">
    <property type="taxonomic scope" value="Archaea"/>
</dbReference>
<dbReference type="HOGENOM" id="CLU_005281_4_1_2"/>
<dbReference type="OrthoDB" id="1798at2157"/>
<dbReference type="PhylomeDB" id="Q8U0N1"/>
<dbReference type="Proteomes" id="UP000001013">
    <property type="component" value="Chromosome"/>
</dbReference>
<dbReference type="GO" id="GO:0003723">
    <property type="term" value="F:RNA binding"/>
    <property type="evidence" value="ECO:0007669"/>
    <property type="project" value="InterPro"/>
</dbReference>
<dbReference type="GO" id="GO:0160150">
    <property type="term" value="F:tRNA pseudouridine(13) synthase activity"/>
    <property type="evidence" value="ECO:0007669"/>
    <property type="project" value="UniProtKB-EC"/>
</dbReference>
<dbReference type="GO" id="GO:0031119">
    <property type="term" value="P:tRNA pseudouridine synthesis"/>
    <property type="evidence" value="ECO:0007669"/>
    <property type="project" value="UniProtKB-UniRule"/>
</dbReference>
<dbReference type="FunFam" id="3.30.70.3160:FF:000001">
    <property type="entry name" value="Probable tRNA pseudouridine synthase D"/>
    <property type="match status" value="1"/>
</dbReference>
<dbReference type="Gene3D" id="1.10.1510.30">
    <property type="match status" value="1"/>
</dbReference>
<dbReference type="Gene3D" id="3.30.70.3160">
    <property type="match status" value="1"/>
</dbReference>
<dbReference type="Gene3D" id="3.30.2350.20">
    <property type="entry name" value="TruD, catalytic domain"/>
    <property type="match status" value="1"/>
</dbReference>
<dbReference type="HAMAP" id="MF_01082">
    <property type="entry name" value="TruD"/>
    <property type="match status" value="1"/>
</dbReference>
<dbReference type="InterPro" id="IPR020103">
    <property type="entry name" value="PsdUridine_synth_cat_dom_sf"/>
</dbReference>
<dbReference type="InterPro" id="IPR001656">
    <property type="entry name" value="PsdUridine_synth_TruD"/>
</dbReference>
<dbReference type="InterPro" id="IPR020119">
    <property type="entry name" value="PsdUridine_synth_TruD_CS"/>
</dbReference>
<dbReference type="InterPro" id="IPR011760">
    <property type="entry name" value="PsdUridine_synth_TruD_insert"/>
</dbReference>
<dbReference type="InterPro" id="IPR042214">
    <property type="entry name" value="TruD_catalytic"/>
</dbReference>
<dbReference type="NCBIfam" id="TIGR00094">
    <property type="entry name" value="tRNA_TruD_broad"/>
    <property type="match status" value="1"/>
</dbReference>
<dbReference type="PANTHER" id="PTHR13326:SF21">
    <property type="entry name" value="PSEUDOURIDYLATE SYNTHASE PUS7L"/>
    <property type="match status" value="1"/>
</dbReference>
<dbReference type="PANTHER" id="PTHR13326">
    <property type="entry name" value="TRNA PSEUDOURIDINE SYNTHASE D"/>
    <property type="match status" value="1"/>
</dbReference>
<dbReference type="Pfam" id="PF01142">
    <property type="entry name" value="TruD"/>
    <property type="match status" value="1"/>
</dbReference>
<dbReference type="PIRSF" id="PIRSF037016">
    <property type="entry name" value="Pseudouridin_synth_euk_prd"/>
    <property type="match status" value="1"/>
</dbReference>
<dbReference type="SUPFAM" id="SSF55120">
    <property type="entry name" value="Pseudouridine synthase"/>
    <property type="match status" value="1"/>
</dbReference>
<dbReference type="PROSITE" id="PS50984">
    <property type="entry name" value="TRUD"/>
    <property type="match status" value="1"/>
</dbReference>
<dbReference type="PROSITE" id="PS01268">
    <property type="entry name" value="UPF0024"/>
    <property type="match status" value="1"/>
</dbReference>
<accession>Q8U0N1</accession>
<organism>
    <name type="scientific">Pyrococcus furiosus (strain ATCC 43587 / DSM 3638 / JCM 8422 / Vc1)</name>
    <dbReference type="NCBI Taxonomy" id="186497"/>
    <lineage>
        <taxon>Archaea</taxon>
        <taxon>Methanobacteriati</taxon>
        <taxon>Methanobacteriota</taxon>
        <taxon>Thermococci</taxon>
        <taxon>Thermococcales</taxon>
        <taxon>Thermococcaceae</taxon>
        <taxon>Pyrococcus</taxon>
    </lineage>
</organism>
<evidence type="ECO:0000255" key="1">
    <source>
        <dbReference type="HAMAP-Rule" id="MF_01082"/>
    </source>
</evidence>
<gene>
    <name evidence="1" type="primary">truD</name>
    <name type="ordered locus">PF1555</name>
</gene>
<sequence>MSDPVGGLKYLTTSPGIGGKIKVYPEDFIVKEVIPKSIFKAGKCKIYILKKKNWETMAAIKEIAKRVGVHYSEIGFAGTKDRHAVTYQYISICRDVNLEEVKIRDIELKFVGYGRPLKLGFLLGNFFKIRVRESNPSLLPSVIEEAKEKGGFPNYFGIQRFGEKRSVNHVVGKLLLLGKYEEAAEVFLGFPGKGMEGDEARRKFLETKDVDLALREFPNFLRYERAMLYRYKETGSWKKAFLVLPRPILRIFIHSFQSYLFNLYLSRRIEEGLPLNKALPGDIVIQVKKGIPLRKRTYRVTENNVDFVNRKIKEGEAMVSGPIFGYMYRKGKGIPGRLEEEILEEAGVKLEYFKKLPKPMREPGGRRELLIRPMKFAYKVEDRDVIFRFFLPKGVYATSVLREIMKN</sequence>
<protein>
    <recommendedName>
        <fullName evidence="1">Probable tRNA pseudouridine synthase D</fullName>
        <ecNumber evidence="1">5.4.99.27</ecNumber>
    </recommendedName>
    <alternativeName>
        <fullName evidence="1">tRNA pseudouridine(13) synthase</fullName>
    </alternativeName>
    <alternativeName>
        <fullName evidence="1">tRNA pseudouridylate synthase D</fullName>
    </alternativeName>
    <alternativeName>
        <fullName evidence="1">tRNA-uridine isomerase D</fullName>
    </alternativeName>
</protein>
<comment type="function">
    <text evidence="1">Could be responsible for synthesis of pseudouridine from uracil-13 in transfer RNAs.</text>
</comment>
<comment type="catalytic activity">
    <reaction evidence="1">
        <text>uridine(13) in tRNA = pseudouridine(13) in tRNA</text>
        <dbReference type="Rhea" id="RHEA:42540"/>
        <dbReference type="Rhea" id="RHEA-COMP:10105"/>
        <dbReference type="Rhea" id="RHEA-COMP:10106"/>
        <dbReference type="ChEBI" id="CHEBI:65314"/>
        <dbReference type="ChEBI" id="CHEBI:65315"/>
        <dbReference type="EC" id="5.4.99.27"/>
    </reaction>
</comment>
<comment type="similarity">
    <text evidence="1">Belongs to the pseudouridine synthase TruD family.</text>
</comment>
<keyword id="KW-0413">Isomerase</keyword>
<keyword id="KW-1185">Reference proteome</keyword>
<keyword id="KW-0819">tRNA processing</keyword>
<reference key="1">
    <citation type="journal article" date="1999" name="Genetics">
        <title>Divergence of the hyperthermophilic archaea Pyrococcus furiosus and P. horikoshii inferred from complete genomic sequences.</title>
        <authorList>
            <person name="Maeder D.L."/>
            <person name="Weiss R.B."/>
            <person name="Dunn D.M."/>
            <person name="Cherry J.L."/>
            <person name="Gonzalez J.M."/>
            <person name="DiRuggiero J."/>
            <person name="Robb F.T."/>
        </authorList>
    </citation>
    <scope>NUCLEOTIDE SEQUENCE [LARGE SCALE GENOMIC DNA]</scope>
    <source>
        <strain>ATCC 43587 / DSM 3638 / JCM 8422 / Vc1</strain>
    </source>
</reference>
<feature type="chain" id="PRO_0000152551" description="Probable tRNA pseudouridine synthase D">
    <location>
        <begin position="1"/>
        <end position="407"/>
    </location>
</feature>
<feature type="domain" description="TRUD" evidence="1">
    <location>
        <begin position="151"/>
        <end position="372"/>
    </location>
</feature>
<feature type="active site" description="Nucleophile" evidence="1">
    <location>
        <position position="81"/>
    </location>
</feature>
<name>TRUD_PYRFU</name>